<accession>Q5PKG2</accession>
<proteinExistence type="inferred from homology"/>
<protein>
    <recommendedName>
        <fullName evidence="1">HTH-type transcriptional activator RhaS</fullName>
    </recommendedName>
    <alternativeName>
        <fullName evidence="1">L-rhamnose operon regulatory protein RhaS</fullName>
    </alternativeName>
</protein>
<gene>
    <name evidence="1" type="primary">rhaS</name>
    <name type="ordered locus">SPA3891</name>
</gene>
<sequence length="278" mass="32070">MTVLHSVDFFPSGKAPVAIEPRLPQAAFPEHHHDFHEIVIVEHGTGIHVFNGQPYTISGGTVCFVRDHDRHLYEHTDNLCLTNVLWRSPDAFQFLAGLDQLLPQEQDGYYPSHWRVNQSVLQQVRQLVGLMEHAGDGMDAPAVANREILFMQLLVLLRRSSLMEGATNNDAKLNQLMAWLEDHFAEEVCWEAVAEQFSLSLRTLHRQLKQHTGLTPQRYLNRLRLIKARHLLRHSDHSVTEIAYRCGFGDSNHFSTLFRREFNWSPRDIRQGRDAIIQ</sequence>
<reference key="1">
    <citation type="journal article" date="2004" name="Nat. Genet.">
        <title>Comparison of genome degradation in Paratyphi A and Typhi, human-restricted serovars of Salmonella enterica that cause typhoid.</title>
        <authorList>
            <person name="McClelland M."/>
            <person name="Sanderson K.E."/>
            <person name="Clifton S.W."/>
            <person name="Latreille P."/>
            <person name="Porwollik S."/>
            <person name="Sabo A."/>
            <person name="Meyer R."/>
            <person name="Bieri T."/>
            <person name="Ozersky P."/>
            <person name="McLellan M."/>
            <person name="Harkins C.R."/>
            <person name="Wang C."/>
            <person name="Nguyen C."/>
            <person name="Berghoff A."/>
            <person name="Elliott G."/>
            <person name="Kohlberg S."/>
            <person name="Strong C."/>
            <person name="Du F."/>
            <person name="Carter J."/>
            <person name="Kremizki C."/>
            <person name="Layman D."/>
            <person name="Leonard S."/>
            <person name="Sun H."/>
            <person name="Fulton L."/>
            <person name="Nash W."/>
            <person name="Miner T."/>
            <person name="Minx P."/>
            <person name="Delehaunty K."/>
            <person name="Fronick C."/>
            <person name="Magrini V."/>
            <person name="Nhan M."/>
            <person name="Warren W."/>
            <person name="Florea L."/>
            <person name="Spieth J."/>
            <person name="Wilson R.K."/>
        </authorList>
    </citation>
    <scope>NUCLEOTIDE SEQUENCE [LARGE SCALE GENOMIC DNA]</scope>
    <source>
        <strain>ATCC 9150 / SARB42</strain>
    </source>
</reference>
<feature type="chain" id="PRO_0000194569" description="HTH-type transcriptional activator RhaS">
    <location>
        <begin position="1"/>
        <end position="278"/>
    </location>
</feature>
<feature type="domain" description="HTH araC/xylS-type" evidence="1">
    <location>
        <begin position="174"/>
        <end position="272"/>
    </location>
</feature>
<feature type="DNA-binding region" description="H-T-H motif" evidence="1">
    <location>
        <begin position="191"/>
        <end position="212"/>
    </location>
</feature>
<feature type="DNA-binding region" description="H-T-H motif" evidence="1">
    <location>
        <begin position="239"/>
        <end position="262"/>
    </location>
</feature>
<feature type="site" description="Interaction with sigma-70" evidence="1">
    <location>
        <position position="241"/>
    </location>
</feature>
<feature type="site" description="Interaction with sigma-70" evidence="1">
    <location>
        <position position="250"/>
    </location>
</feature>
<organism>
    <name type="scientific">Salmonella paratyphi A (strain ATCC 9150 / SARB42)</name>
    <dbReference type="NCBI Taxonomy" id="295319"/>
    <lineage>
        <taxon>Bacteria</taxon>
        <taxon>Pseudomonadati</taxon>
        <taxon>Pseudomonadota</taxon>
        <taxon>Gammaproteobacteria</taxon>
        <taxon>Enterobacterales</taxon>
        <taxon>Enterobacteriaceae</taxon>
        <taxon>Salmonella</taxon>
    </lineage>
</organism>
<comment type="function">
    <text evidence="1">Activates expression of the rhaBAD and rhaT operons.</text>
</comment>
<comment type="subunit">
    <text evidence="1">Binds DNA as a dimer.</text>
</comment>
<comment type="subcellular location">
    <subcellularLocation>
        <location evidence="1">Cytoplasm</location>
    </subcellularLocation>
</comment>
<name>RHAS_SALPA</name>
<keyword id="KW-0010">Activator</keyword>
<keyword id="KW-0963">Cytoplasm</keyword>
<keyword id="KW-0238">DNA-binding</keyword>
<keyword id="KW-0677">Repeat</keyword>
<keyword id="KW-0684">Rhamnose metabolism</keyword>
<keyword id="KW-0804">Transcription</keyword>
<keyword id="KW-0805">Transcription regulation</keyword>
<evidence type="ECO:0000255" key="1">
    <source>
        <dbReference type="HAMAP-Rule" id="MF_01534"/>
    </source>
</evidence>
<dbReference type="EMBL" id="CP000026">
    <property type="protein sequence ID" value="AAV79657.1"/>
    <property type="molecule type" value="Genomic_DNA"/>
</dbReference>
<dbReference type="RefSeq" id="WP_000217109.1">
    <property type="nucleotide sequence ID" value="NC_006511.1"/>
</dbReference>
<dbReference type="SMR" id="Q5PKG2"/>
<dbReference type="KEGG" id="spt:SPA3891"/>
<dbReference type="HOGENOM" id="CLU_000445_88_5_6"/>
<dbReference type="Proteomes" id="UP000008185">
    <property type="component" value="Chromosome"/>
</dbReference>
<dbReference type="GO" id="GO:0005737">
    <property type="term" value="C:cytoplasm"/>
    <property type="evidence" value="ECO:0007669"/>
    <property type="project" value="UniProtKB-SubCell"/>
</dbReference>
<dbReference type="GO" id="GO:0003700">
    <property type="term" value="F:DNA-binding transcription factor activity"/>
    <property type="evidence" value="ECO:0007669"/>
    <property type="project" value="UniProtKB-UniRule"/>
</dbReference>
<dbReference type="GO" id="GO:0043565">
    <property type="term" value="F:sequence-specific DNA binding"/>
    <property type="evidence" value="ECO:0007669"/>
    <property type="project" value="InterPro"/>
</dbReference>
<dbReference type="GO" id="GO:0045893">
    <property type="term" value="P:positive regulation of DNA-templated transcription"/>
    <property type="evidence" value="ECO:0007669"/>
    <property type="project" value="UniProtKB-UniRule"/>
</dbReference>
<dbReference type="GO" id="GO:0019299">
    <property type="term" value="P:rhamnose metabolic process"/>
    <property type="evidence" value="ECO:0007669"/>
    <property type="project" value="UniProtKB-UniRule"/>
</dbReference>
<dbReference type="CDD" id="cd06977">
    <property type="entry name" value="cupin_RhaR_RhaS-like_N"/>
    <property type="match status" value="1"/>
</dbReference>
<dbReference type="Gene3D" id="1.10.10.60">
    <property type="entry name" value="Homeodomain-like"/>
    <property type="match status" value="1"/>
</dbReference>
<dbReference type="Gene3D" id="2.60.120.10">
    <property type="entry name" value="Jelly Rolls"/>
    <property type="match status" value="1"/>
</dbReference>
<dbReference type="HAMAP" id="MF_01534">
    <property type="entry name" value="HTH_type_RhaS"/>
    <property type="match status" value="1"/>
</dbReference>
<dbReference type="InterPro" id="IPR003313">
    <property type="entry name" value="AraC-bd"/>
</dbReference>
<dbReference type="InterPro" id="IPR050204">
    <property type="entry name" value="AraC_XylS_family_regulators"/>
</dbReference>
<dbReference type="InterPro" id="IPR009057">
    <property type="entry name" value="Homeodomain-like_sf"/>
</dbReference>
<dbReference type="InterPro" id="IPR037923">
    <property type="entry name" value="HTH-like"/>
</dbReference>
<dbReference type="InterPro" id="IPR018060">
    <property type="entry name" value="HTH_AraC"/>
</dbReference>
<dbReference type="InterPro" id="IPR018062">
    <property type="entry name" value="HTH_AraC-typ_CS"/>
</dbReference>
<dbReference type="InterPro" id="IPR047220">
    <property type="entry name" value="RhaR_RhaS-like_N"/>
</dbReference>
<dbReference type="InterPro" id="IPR014710">
    <property type="entry name" value="RmlC-like_jellyroll"/>
</dbReference>
<dbReference type="InterPro" id="IPR020449">
    <property type="entry name" value="Tscrpt_reg_AraC-type_HTH"/>
</dbReference>
<dbReference type="InterPro" id="IPR023609">
    <property type="entry name" value="Tscrpt_reg_HTH_RhaS"/>
</dbReference>
<dbReference type="NCBIfam" id="NF010028">
    <property type="entry name" value="PRK13503.1"/>
    <property type="match status" value="1"/>
</dbReference>
<dbReference type="PANTHER" id="PTHR46796:SF13">
    <property type="entry name" value="HTH-TYPE TRANSCRIPTIONAL ACTIVATOR RHAS"/>
    <property type="match status" value="1"/>
</dbReference>
<dbReference type="PANTHER" id="PTHR46796">
    <property type="entry name" value="HTH-TYPE TRANSCRIPTIONAL ACTIVATOR RHAS-RELATED"/>
    <property type="match status" value="1"/>
</dbReference>
<dbReference type="Pfam" id="PF02311">
    <property type="entry name" value="AraC_binding"/>
    <property type="match status" value="1"/>
</dbReference>
<dbReference type="Pfam" id="PF12833">
    <property type="entry name" value="HTH_18"/>
    <property type="match status" value="1"/>
</dbReference>
<dbReference type="PRINTS" id="PR00032">
    <property type="entry name" value="HTHARAC"/>
</dbReference>
<dbReference type="SMART" id="SM00342">
    <property type="entry name" value="HTH_ARAC"/>
    <property type="match status" value="1"/>
</dbReference>
<dbReference type="SUPFAM" id="SSF46689">
    <property type="entry name" value="Homeodomain-like"/>
    <property type="match status" value="2"/>
</dbReference>
<dbReference type="SUPFAM" id="SSF51215">
    <property type="entry name" value="Regulatory protein AraC"/>
    <property type="match status" value="1"/>
</dbReference>
<dbReference type="PROSITE" id="PS00041">
    <property type="entry name" value="HTH_ARAC_FAMILY_1"/>
    <property type="match status" value="1"/>
</dbReference>
<dbReference type="PROSITE" id="PS01124">
    <property type="entry name" value="HTH_ARAC_FAMILY_2"/>
    <property type="match status" value="1"/>
</dbReference>